<organism>
    <name type="scientific">Mycobacterium tuberculosis (strain ATCC 25618 / H37Rv)</name>
    <dbReference type="NCBI Taxonomy" id="83332"/>
    <lineage>
        <taxon>Bacteria</taxon>
        <taxon>Bacillati</taxon>
        <taxon>Actinomycetota</taxon>
        <taxon>Actinomycetes</taxon>
        <taxon>Mycobacteriales</taxon>
        <taxon>Mycobacteriaceae</taxon>
        <taxon>Mycobacterium</taxon>
        <taxon>Mycobacterium tuberculosis complex</taxon>
    </lineage>
</organism>
<dbReference type="EMBL" id="AL123456">
    <property type="protein sequence ID" value="CCP43638.1"/>
    <property type="molecule type" value="Genomic_DNA"/>
</dbReference>
<dbReference type="PIR" id="G70781">
    <property type="entry name" value="G70781"/>
</dbReference>
<dbReference type="RefSeq" id="NP_215405.1">
    <property type="nucleotide sequence ID" value="NC_000962.3"/>
</dbReference>
<dbReference type="RefSeq" id="WP_010886092.1">
    <property type="nucleotide sequence ID" value="NC_000962.3"/>
</dbReference>
<dbReference type="SMR" id="P9WMG1"/>
<dbReference type="STRING" id="83332.Rv0890c"/>
<dbReference type="PaxDb" id="83332-Rv0890c"/>
<dbReference type="DNASU" id="885227"/>
<dbReference type="GeneID" id="885227"/>
<dbReference type="KEGG" id="mtu:Rv0890c"/>
<dbReference type="PATRIC" id="fig|83332.12.peg.993"/>
<dbReference type="TubercuList" id="Rv0890c"/>
<dbReference type="eggNOG" id="COG2197">
    <property type="taxonomic scope" value="Bacteria"/>
</dbReference>
<dbReference type="eggNOG" id="COG3903">
    <property type="taxonomic scope" value="Bacteria"/>
</dbReference>
<dbReference type="InParanoid" id="P9WMG1"/>
<dbReference type="OrthoDB" id="136365at2"/>
<dbReference type="PhylomeDB" id="P9WMG1"/>
<dbReference type="Proteomes" id="UP000001584">
    <property type="component" value="Chromosome"/>
</dbReference>
<dbReference type="GO" id="GO:0005829">
    <property type="term" value="C:cytosol"/>
    <property type="evidence" value="ECO:0007005"/>
    <property type="project" value="MTBBASE"/>
</dbReference>
<dbReference type="GO" id="GO:0009274">
    <property type="term" value="C:peptidoglycan-based cell wall"/>
    <property type="evidence" value="ECO:0007005"/>
    <property type="project" value="MTBBASE"/>
</dbReference>
<dbReference type="GO" id="GO:0003677">
    <property type="term" value="F:DNA binding"/>
    <property type="evidence" value="ECO:0007669"/>
    <property type="project" value="UniProtKB-KW"/>
</dbReference>
<dbReference type="GO" id="GO:0006355">
    <property type="term" value="P:regulation of DNA-templated transcription"/>
    <property type="evidence" value="ECO:0007669"/>
    <property type="project" value="InterPro"/>
</dbReference>
<dbReference type="CDD" id="cd06170">
    <property type="entry name" value="LuxR_C_like"/>
    <property type="match status" value="1"/>
</dbReference>
<dbReference type="FunFam" id="1.10.10.10:FF:000553">
    <property type="entry name" value="Transcriptional regulator, LuxR family"/>
    <property type="match status" value="1"/>
</dbReference>
<dbReference type="Gene3D" id="3.40.50.300">
    <property type="entry name" value="P-loop containing nucleotide triphosphate hydrolases"/>
    <property type="match status" value="1"/>
</dbReference>
<dbReference type="Gene3D" id="1.25.40.10">
    <property type="entry name" value="Tetratricopeptide repeat domain"/>
    <property type="match status" value="1"/>
</dbReference>
<dbReference type="Gene3D" id="1.10.10.10">
    <property type="entry name" value="Winged helix-like DNA-binding domain superfamily/Winged helix DNA-binding domain"/>
    <property type="match status" value="1"/>
</dbReference>
<dbReference type="InterPro" id="IPR027417">
    <property type="entry name" value="P-loop_NTPase"/>
</dbReference>
<dbReference type="InterPro" id="IPR016032">
    <property type="entry name" value="Sig_transdc_resp-reg_C-effctor"/>
</dbReference>
<dbReference type="InterPro" id="IPR011990">
    <property type="entry name" value="TPR-like_helical_dom_sf"/>
</dbReference>
<dbReference type="InterPro" id="IPR000792">
    <property type="entry name" value="Tscrpt_reg_LuxR_C"/>
</dbReference>
<dbReference type="InterPro" id="IPR036388">
    <property type="entry name" value="WH-like_DNA-bd_sf"/>
</dbReference>
<dbReference type="PANTHER" id="PTHR47691:SF3">
    <property type="entry name" value="HTH-TYPE TRANSCRIPTIONAL REGULATOR RV0890C-RELATED"/>
    <property type="match status" value="1"/>
</dbReference>
<dbReference type="PANTHER" id="PTHR47691">
    <property type="entry name" value="REGULATOR-RELATED"/>
    <property type="match status" value="1"/>
</dbReference>
<dbReference type="Pfam" id="PF00196">
    <property type="entry name" value="GerE"/>
    <property type="match status" value="1"/>
</dbReference>
<dbReference type="PRINTS" id="PR00364">
    <property type="entry name" value="DISEASERSIST"/>
</dbReference>
<dbReference type="PRINTS" id="PR00038">
    <property type="entry name" value="HTHLUXR"/>
</dbReference>
<dbReference type="SMART" id="SM00421">
    <property type="entry name" value="HTH_LUXR"/>
    <property type="match status" value="1"/>
</dbReference>
<dbReference type="SUPFAM" id="SSF46894">
    <property type="entry name" value="C-terminal effector domain of the bipartite response regulators"/>
    <property type="match status" value="1"/>
</dbReference>
<dbReference type="SUPFAM" id="SSF52540">
    <property type="entry name" value="P-loop containing nucleoside triphosphate hydrolases"/>
    <property type="match status" value="1"/>
</dbReference>
<dbReference type="PROSITE" id="PS00622">
    <property type="entry name" value="HTH_LUXR_1"/>
    <property type="match status" value="1"/>
</dbReference>
<dbReference type="PROSITE" id="PS50043">
    <property type="entry name" value="HTH_LUXR_2"/>
    <property type="match status" value="1"/>
</dbReference>
<keyword id="KW-0238">DNA-binding</keyword>
<keyword id="KW-1185">Reference proteome</keyword>
<keyword id="KW-0804">Transcription</keyword>
<keyword id="KW-0805">Transcription regulation</keyword>
<sequence length="882" mass="94496">MRALLAQNRLVTLCGTGGVGKTRLAIQIASASELRDGLCFVDLAPITESGIVAATAARAVGLPDQPGRSTMDSLRRFIGNRRMLMVLDNCEHLLDACAALVVELLGACPELTILATSREPIGMAGEITWRVPSMSITDEAVELFADRASRVQPGFTIANHNAAAVGEICRRLDGIPLAIEFAAARVRSMSPLEIADGLDDCFRLLAGGVRGAVQRQQTLRASIDWSHALLTETEQILFRRLAPFVGGFDLAAVRAVAAGSDLDPFSVLDQLTLLVDKSLVVADDCQGRTRYRLLETVRRYALEKLGDSGEADVHARHRDYYTALAASLNTPADNDHQRLVARAETEIDNLRAAFAWSRENGHITEALQLASSLQPIWFGRAHLREGLSWFNSILEDQRFHRLAVSTAVRARALADKAMLSTWLATSPVGATDIIAPAQQALAMAREVGDPAALVRALTACGCSSGYNAEAAAPYFAEATDLARAIDDKWTLCQILYWRGVGTCISGDPNALRAAAEECRDLADTIGDRFVSRHCSLWLSLAQMWAGNLTEALELSREITAEAEASNDVPTKVLGLYTQAQVLAYCGASAAHAIAGACIAAATELGGVYQGIGYAAMTYAALAAGDVTAALEASDAARPILRAQPDQVTMHQVLMAQLALAGGDAIAARQFANDAVDATNGWHRMVALTIRARVATARGEPELARDDAHAALACGAELHIYQGMPDAMELLAGLAGEVGSHSEGVRLLGAAAALRQQTRQVRFKIWDAGYQASVTALREAMGDEDFDRAWAEGAALSTDEAIAYAQRGRGERKRPARGWGSLTPTERDVVRLVSEGLSNKDIAKRLFVSPRTVQTHLTHVYAKLGLPSRVQLVDEAARRGSPS</sequence>
<comment type="induction">
    <text evidence="2">Up-regulated 17-fold 7 days after infection of human macrophages.</text>
</comment>
<proteinExistence type="evidence at protein level"/>
<feature type="chain" id="PRO_0000184201" description="Putative HTH-type transcriptional regulator Rv0890c">
    <location>
        <begin position="1"/>
        <end position="882"/>
    </location>
</feature>
<feature type="domain" description="HTH luxR-type" evidence="1">
    <location>
        <begin position="814"/>
        <end position="879"/>
    </location>
</feature>
<feature type="DNA-binding region" description="H-T-H motif" evidence="1">
    <location>
        <begin position="838"/>
        <end position="857"/>
    </location>
</feature>
<name>Y890_MYCTU</name>
<protein>
    <recommendedName>
        <fullName>Putative HTH-type transcriptional regulator Rv0890c</fullName>
    </recommendedName>
</protein>
<reference key="1">
    <citation type="journal article" date="1998" name="Nature">
        <title>Deciphering the biology of Mycobacterium tuberculosis from the complete genome sequence.</title>
        <authorList>
            <person name="Cole S.T."/>
            <person name="Brosch R."/>
            <person name="Parkhill J."/>
            <person name="Garnier T."/>
            <person name="Churcher C.M."/>
            <person name="Harris D.E."/>
            <person name="Gordon S.V."/>
            <person name="Eiglmeier K."/>
            <person name="Gas S."/>
            <person name="Barry C.E. III"/>
            <person name="Tekaia F."/>
            <person name="Badcock K."/>
            <person name="Basham D."/>
            <person name="Brown D."/>
            <person name="Chillingworth T."/>
            <person name="Connor R."/>
            <person name="Davies R.M."/>
            <person name="Devlin K."/>
            <person name="Feltwell T."/>
            <person name="Gentles S."/>
            <person name="Hamlin N."/>
            <person name="Holroyd S."/>
            <person name="Hornsby T."/>
            <person name="Jagels K."/>
            <person name="Krogh A."/>
            <person name="McLean J."/>
            <person name="Moule S."/>
            <person name="Murphy L.D."/>
            <person name="Oliver S."/>
            <person name="Osborne J."/>
            <person name="Quail M.A."/>
            <person name="Rajandream M.A."/>
            <person name="Rogers J."/>
            <person name="Rutter S."/>
            <person name="Seeger K."/>
            <person name="Skelton S."/>
            <person name="Squares S."/>
            <person name="Squares R."/>
            <person name="Sulston J.E."/>
            <person name="Taylor K."/>
            <person name="Whitehead S."/>
            <person name="Barrell B.G."/>
        </authorList>
    </citation>
    <scope>NUCLEOTIDE SEQUENCE [LARGE SCALE GENOMIC DNA]</scope>
    <source>
        <strain>ATCC 25618 / H37Rv</strain>
    </source>
</reference>
<reference key="2">
    <citation type="journal article" date="2006" name="Res. Microbiol.">
        <title>Profiling of Mycobacterium tuberculosis gene expression during human macrophage infection: upregulation of the alternative sigma factor G, a group of transcriptional regulators, and proteins with unknown function.</title>
        <authorList>
            <person name="Cappelli G."/>
            <person name="Volpe E."/>
            <person name="Grassi M."/>
            <person name="Liseo B."/>
            <person name="Colizzi V."/>
            <person name="Mariani F."/>
        </authorList>
    </citation>
    <scope>INDUCTION IN HUMAN MACROPHAGES</scope>
    <source>
        <strain>ATCC 25618 / H37Rv</strain>
    </source>
</reference>
<reference key="3">
    <citation type="journal article" date="2011" name="Mol. Cell. Proteomics">
        <title>Proteogenomic analysis of Mycobacterium tuberculosis by high resolution mass spectrometry.</title>
        <authorList>
            <person name="Kelkar D.S."/>
            <person name="Kumar D."/>
            <person name="Kumar P."/>
            <person name="Balakrishnan L."/>
            <person name="Muthusamy B."/>
            <person name="Yadav A.K."/>
            <person name="Shrivastava P."/>
            <person name="Marimuthu A."/>
            <person name="Anand S."/>
            <person name="Sundaram H."/>
            <person name="Kingsbury R."/>
            <person name="Harsha H.C."/>
            <person name="Nair B."/>
            <person name="Prasad T.S."/>
            <person name="Chauhan D.S."/>
            <person name="Katoch K."/>
            <person name="Katoch V.M."/>
            <person name="Kumar P."/>
            <person name="Chaerkady R."/>
            <person name="Ramachandran S."/>
            <person name="Dash D."/>
            <person name="Pandey A."/>
        </authorList>
    </citation>
    <scope>IDENTIFICATION BY MASS SPECTROMETRY [LARGE SCALE ANALYSIS]</scope>
    <source>
        <strain>ATCC 25618 / H37Rv</strain>
    </source>
</reference>
<evidence type="ECO:0000255" key="1">
    <source>
        <dbReference type="PROSITE-ProRule" id="PRU00411"/>
    </source>
</evidence>
<evidence type="ECO:0000269" key="2">
    <source>
    </source>
</evidence>
<gene>
    <name type="ordered locus">Rv0890c</name>
    <name type="ORF">MTCY31.18c</name>
</gene>
<accession>P9WMG1</accession>
<accession>L0T7T8</accession>
<accession>Q10550</accession>